<organism>
    <name type="scientific">Francisella tularensis subsp. tularensis (strain SCHU S4 / Schu 4)</name>
    <dbReference type="NCBI Taxonomy" id="177416"/>
    <lineage>
        <taxon>Bacteria</taxon>
        <taxon>Pseudomonadati</taxon>
        <taxon>Pseudomonadota</taxon>
        <taxon>Gammaproteobacteria</taxon>
        <taxon>Thiotrichales</taxon>
        <taxon>Francisellaceae</taxon>
        <taxon>Francisella</taxon>
    </lineage>
</organism>
<name>RPOA1_FRATT</name>
<protein>
    <recommendedName>
        <fullName evidence="1">DNA-directed RNA polymerase subunit alpha 1</fullName>
        <shortName evidence="1">RNAP subunit alpha 1</shortName>
        <ecNumber evidence="1">2.7.7.6</ecNumber>
    </recommendedName>
    <alternativeName>
        <fullName evidence="1">RNA polymerase subunit alpha 1</fullName>
    </alternativeName>
    <alternativeName>
        <fullName evidence="1">Transcriptase subunit alpha 1</fullName>
    </alternativeName>
</protein>
<reference key="1">
    <citation type="journal article" date="2005" name="Nat. Genet.">
        <title>The complete genome sequence of Francisella tularensis, the causative agent of tularemia.</title>
        <authorList>
            <person name="Larsson P."/>
            <person name="Oyston P.C.F."/>
            <person name="Chain P."/>
            <person name="Chu M.C."/>
            <person name="Duffield M."/>
            <person name="Fuxelius H.-H."/>
            <person name="Garcia E."/>
            <person name="Haelltorp G."/>
            <person name="Johansson D."/>
            <person name="Isherwood K.E."/>
            <person name="Karp P.D."/>
            <person name="Larsson E."/>
            <person name="Liu Y."/>
            <person name="Michell S."/>
            <person name="Prior J."/>
            <person name="Prior R."/>
            <person name="Malfatti S."/>
            <person name="Sjoestedt A."/>
            <person name="Svensson K."/>
            <person name="Thompson N."/>
            <person name="Vergez L."/>
            <person name="Wagg J.K."/>
            <person name="Wren B.W."/>
            <person name="Lindler L.E."/>
            <person name="Andersson S.G.E."/>
            <person name="Forsman M."/>
            <person name="Titball R.W."/>
        </authorList>
    </citation>
    <scope>NUCLEOTIDE SEQUENCE [LARGE SCALE GENOMIC DNA]</scope>
    <source>
        <strain>SCHU S4 / Schu 4</strain>
    </source>
</reference>
<dbReference type="EC" id="2.7.7.6" evidence="1"/>
<dbReference type="EMBL" id="AJ749949">
    <property type="protein sequence ID" value="CAG44983.1"/>
    <property type="molecule type" value="Genomic_DNA"/>
</dbReference>
<dbReference type="RefSeq" id="WP_003021582.1">
    <property type="nucleotide sequence ID" value="NZ_CP010290.1"/>
</dbReference>
<dbReference type="RefSeq" id="YP_169399.1">
    <property type="nucleotide sequence ID" value="NC_006570.2"/>
</dbReference>
<dbReference type="SMR" id="Q5NHU3"/>
<dbReference type="STRING" id="177416.FTT_0350"/>
<dbReference type="DNASU" id="3191984"/>
<dbReference type="EnsemblBacteria" id="CAG44983">
    <property type="protein sequence ID" value="CAG44983"/>
    <property type="gene ID" value="FTT_0350"/>
</dbReference>
<dbReference type="KEGG" id="ftu:FTT_0350"/>
<dbReference type="eggNOG" id="COG0202">
    <property type="taxonomic scope" value="Bacteria"/>
</dbReference>
<dbReference type="OrthoDB" id="9805706at2"/>
<dbReference type="Proteomes" id="UP000001174">
    <property type="component" value="Chromosome"/>
</dbReference>
<dbReference type="GO" id="GO:0005737">
    <property type="term" value="C:cytoplasm"/>
    <property type="evidence" value="ECO:0007669"/>
    <property type="project" value="UniProtKB-ARBA"/>
</dbReference>
<dbReference type="GO" id="GO:0000428">
    <property type="term" value="C:DNA-directed RNA polymerase complex"/>
    <property type="evidence" value="ECO:0007669"/>
    <property type="project" value="UniProtKB-KW"/>
</dbReference>
<dbReference type="GO" id="GO:0003677">
    <property type="term" value="F:DNA binding"/>
    <property type="evidence" value="ECO:0007669"/>
    <property type="project" value="UniProtKB-UniRule"/>
</dbReference>
<dbReference type="GO" id="GO:0003899">
    <property type="term" value="F:DNA-directed RNA polymerase activity"/>
    <property type="evidence" value="ECO:0007669"/>
    <property type="project" value="UniProtKB-UniRule"/>
</dbReference>
<dbReference type="GO" id="GO:0046983">
    <property type="term" value="F:protein dimerization activity"/>
    <property type="evidence" value="ECO:0007669"/>
    <property type="project" value="InterPro"/>
</dbReference>
<dbReference type="GO" id="GO:0006351">
    <property type="term" value="P:DNA-templated transcription"/>
    <property type="evidence" value="ECO:0007669"/>
    <property type="project" value="UniProtKB-UniRule"/>
</dbReference>
<dbReference type="CDD" id="cd06928">
    <property type="entry name" value="RNAP_alpha_NTD"/>
    <property type="match status" value="1"/>
</dbReference>
<dbReference type="FunFam" id="1.10.150.20:FF:000001">
    <property type="entry name" value="DNA-directed RNA polymerase subunit alpha"/>
    <property type="match status" value="1"/>
</dbReference>
<dbReference type="Gene3D" id="1.10.150.20">
    <property type="entry name" value="5' to 3' exonuclease, C-terminal subdomain"/>
    <property type="match status" value="1"/>
</dbReference>
<dbReference type="Gene3D" id="2.170.120.12">
    <property type="entry name" value="DNA-directed RNA polymerase, insert domain"/>
    <property type="match status" value="1"/>
</dbReference>
<dbReference type="Gene3D" id="3.30.1360.10">
    <property type="entry name" value="RNA polymerase, RBP11-like subunit"/>
    <property type="match status" value="1"/>
</dbReference>
<dbReference type="HAMAP" id="MF_00059">
    <property type="entry name" value="RNApol_bact_RpoA"/>
    <property type="match status" value="1"/>
</dbReference>
<dbReference type="InterPro" id="IPR011262">
    <property type="entry name" value="DNA-dir_RNA_pol_insert"/>
</dbReference>
<dbReference type="InterPro" id="IPR011263">
    <property type="entry name" value="DNA-dir_RNA_pol_RpoA/D/Rpb3"/>
</dbReference>
<dbReference type="InterPro" id="IPR011773">
    <property type="entry name" value="DNA-dir_RpoA"/>
</dbReference>
<dbReference type="InterPro" id="IPR036603">
    <property type="entry name" value="RBP11-like"/>
</dbReference>
<dbReference type="InterPro" id="IPR011260">
    <property type="entry name" value="RNAP_asu_C"/>
</dbReference>
<dbReference type="InterPro" id="IPR036643">
    <property type="entry name" value="RNApol_insert_sf"/>
</dbReference>
<dbReference type="NCBIfam" id="NF003513">
    <property type="entry name" value="PRK05182.1-2"/>
    <property type="match status" value="1"/>
</dbReference>
<dbReference type="NCBIfam" id="TIGR02027">
    <property type="entry name" value="rpoA"/>
    <property type="match status" value="1"/>
</dbReference>
<dbReference type="Pfam" id="PF01000">
    <property type="entry name" value="RNA_pol_A_bac"/>
    <property type="match status" value="1"/>
</dbReference>
<dbReference type="Pfam" id="PF03118">
    <property type="entry name" value="RNA_pol_A_CTD"/>
    <property type="match status" value="1"/>
</dbReference>
<dbReference type="Pfam" id="PF01193">
    <property type="entry name" value="RNA_pol_L"/>
    <property type="match status" value="1"/>
</dbReference>
<dbReference type="SMART" id="SM00662">
    <property type="entry name" value="RPOLD"/>
    <property type="match status" value="1"/>
</dbReference>
<dbReference type="SUPFAM" id="SSF47789">
    <property type="entry name" value="C-terminal domain of RNA polymerase alpha subunit"/>
    <property type="match status" value="1"/>
</dbReference>
<dbReference type="SUPFAM" id="SSF56553">
    <property type="entry name" value="Insert subdomain of RNA polymerase alpha subunit"/>
    <property type="match status" value="1"/>
</dbReference>
<dbReference type="SUPFAM" id="SSF55257">
    <property type="entry name" value="RBP11-like subunits of RNA polymerase"/>
    <property type="match status" value="1"/>
</dbReference>
<gene>
    <name evidence="1" type="primary">rpoA1</name>
    <name type="ordered locus">FTT_0350</name>
</gene>
<evidence type="ECO:0000255" key="1">
    <source>
        <dbReference type="HAMAP-Rule" id="MF_00059"/>
    </source>
</evidence>
<feature type="chain" id="PRO_0000296808" description="DNA-directed RNA polymerase subunit alpha 1">
    <location>
        <begin position="1"/>
        <end position="323"/>
    </location>
</feature>
<feature type="region of interest" description="Alpha N-terminal domain (alpha-NTD)" evidence="1">
    <location>
        <begin position="1"/>
        <end position="228"/>
    </location>
</feature>
<feature type="region of interest" description="Alpha C-terminal domain (alpha-CTD)" evidence="1">
    <location>
        <begin position="244"/>
        <end position="323"/>
    </location>
</feature>
<proteinExistence type="inferred from homology"/>
<comment type="function">
    <text evidence="1">DNA-dependent RNA polymerase catalyzes the transcription of DNA into RNA using the four ribonucleoside triphosphates as substrates.</text>
</comment>
<comment type="catalytic activity">
    <reaction evidence="1">
        <text>RNA(n) + a ribonucleoside 5'-triphosphate = RNA(n+1) + diphosphate</text>
        <dbReference type="Rhea" id="RHEA:21248"/>
        <dbReference type="Rhea" id="RHEA-COMP:14527"/>
        <dbReference type="Rhea" id="RHEA-COMP:17342"/>
        <dbReference type="ChEBI" id="CHEBI:33019"/>
        <dbReference type="ChEBI" id="CHEBI:61557"/>
        <dbReference type="ChEBI" id="CHEBI:140395"/>
        <dbReference type="EC" id="2.7.7.6"/>
    </reaction>
</comment>
<comment type="subunit">
    <text evidence="1">Homodimer. The RNAP catalytic core consists of 2 alpha, 1 beta, 1 beta' and 1 omega subunit. When a sigma factor is associated with the core the holoenzyme is formed, which can initiate transcription.</text>
</comment>
<comment type="domain">
    <text evidence="1">The N-terminal domain is essential for RNAP assembly and basal transcription, whereas the C-terminal domain is involved in interaction with transcriptional regulators and with upstream promoter elements.</text>
</comment>
<comment type="similarity">
    <text evidence="1">Belongs to the RNA polymerase alpha chain family.</text>
</comment>
<sequence length="323" mass="35358">MSNNNSKLEFVPNIQLKEDLGAFSYKVQLSPVEKGMAHILGNSIRRVLLSSLSGASIIKVNIANVLHEYSTLEDVKEDVVEIVSNLKKVAIKLDTGIDRLDLELSVNKSGVVSAGDFKTTQGVEIINKDQPIATLTNQRAFSLTATVSVGRNVGILSAIPTELERVGDIAVDADFNPIKRVAFEVFDNGDSETLEVFVKTNGTIEPLAAVTKALEYFCEQISVFVSLRVPSNGKTGDVLIDSNIDPILLKPIDDLELTVRSSNCLRAENIKYLGDLVQYSESQLMKIPNLGKKSLNEIKQILIDNNLSLGVQIDNFRELVEGK</sequence>
<keyword id="KW-0240">DNA-directed RNA polymerase</keyword>
<keyword id="KW-0548">Nucleotidyltransferase</keyword>
<keyword id="KW-1185">Reference proteome</keyword>
<keyword id="KW-0804">Transcription</keyword>
<keyword id="KW-0808">Transferase</keyword>
<accession>Q5NHU3</accession>